<dbReference type="EMBL" id="AY509253">
    <property type="protein sequence ID" value="AAS00927.1"/>
    <property type="molecule type" value="Genomic_DNA"/>
</dbReference>
<dbReference type="RefSeq" id="YP_024580.1">
    <property type="nucleotide sequence ID" value="NC_005881.2"/>
</dbReference>
<dbReference type="SMR" id="Q6R7I8"/>
<dbReference type="KEGG" id="vg:2948228"/>
<dbReference type="Proteomes" id="UP000007021">
    <property type="component" value="Segment"/>
</dbReference>
<dbReference type="GO" id="GO:0033644">
    <property type="term" value="C:host cell membrane"/>
    <property type="evidence" value="ECO:0007669"/>
    <property type="project" value="UniProtKB-SubCell"/>
</dbReference>
<dbReference type="GO" id="GO:0016020">
    <property type="term" value="C:membrane"/>
    <property type="evidence" value="ECO:0007669"/>
    <property type="project" value="UniProtKB-KW"/>
</dbReference>
<organism>
    <name type="scientific">Ostreid herpesvirus 1 (isolate France)</name>
    <name type="common">OsHV-1</name>
    <name type="synonym">Pacific oyster herpesvirus</name>
    <dbReference type="NCBI Taxonomy" id="654903"/>
    <lineage>
        <taxon>Viruses</taxon>
        <taxon>Duplodnaviria</taxon>
        <taxon>Heunggongvirae</taxon>
        <taxon>Peploviricota</taxon>
        <taxon>Herviviricetes</taxon>
        <taxon>Herpesvirales</taxon>
        <taxon>Malacoherpesviridae</taxon>
        <taxon>Ostreavirus</taxon>
        <taxon>Ostreavirus ostreidmalaco1</taxon>
        <taxon>Ostreid herpesvirus 1</taxon>
    </lineage>
</organism>
<evidence type="ECO:0000255" key="1"/>
<evidence type="ECO:0000305" key="2"/>
<proteinExistence type="predicted"/>
<organismHost>
    <name type="scientific">Magallana gigas</name>
    <name type="common">Pacific oyster</name>
    <name type="synonym">Crassostrea gigas</name>
    <dbReference type="NCBI Taxonomy" id="29159"/>
</organismHost>
<organismHost>
    <name type="scientific">Pecten maximus</name>
    <name type="common">King scallop</name>
    <name type="synonym">Pilgrim's clam</name>
    <dbReference type="NCBI Taxonomy" id="6579"/>
</organismHost>
<comment type="subcellular location">
    <subcellularLocation>
        <location evidence="2">Host membrane</location>
        <topology evidence="2">Single-pass membrane protein</topology>
    </subcellularLocation>
</comment>
<name>Y036_OSHVF</name>
<feature type="chain" id="PRO_0000385066" description="Uncharacterized protein ORF36">
    <location>
        <begin position="1"/>
        <end position="75"/>
    </location>
</feature>
<feature type="transmembrane region" description="Helical" evidence="1">
    <location>
        <begin position="44"/>
        <end position="64"/>
    </location>
</feature>
<keyword id="KW-1043">Host membrane</keyword>
<keyword id="KW-0472">Membrane</keyword>
<keyword id="KW-1185">Reference proteome</keyword>
<keyword id="KW-0812">Transmembrane</keyword>
<keyword id="KW-1133">Transmembrane helix</keyword>
<protein>
    <recommendedName>
        <fullName>Uncharacterized protein ORF36</fullName>
    </recommendedName>
</protein>
<gene>
    <name type="ORF">ORF36</name>
</gene>
<reference key="1">
    <citation type="journal article" date="2005" name="J. Gen. Virol.">
        <title>A novel class of herpesvirus with bivalve hosts.</title>
        <authorList>
            <person name="Davison A.J."/>
            <person name="Trus B.L."/>
            <person name="Cheng N."/>
            <person name="Steven A.C."/>
            <person name="Watson M.S."/>
            <person name="Cunningham C."/>
            <person name="Le Deuff R.M."/>
            <person name="Renault T."/>
        </authorList>
    </citation>
    <scope>NUCLEOTIDE SEQUENCE [LARGE SCALE GENOMIC DNA]</scope>
</reference>
<accession>Q6R7I8</accession>
<sequence>MSTTEQTVCEIEQESELIPAKPQYIIVKKPKRQAWQRVLLLFRIINMIVIWAALIALFVKLYILRGPIPRSYFHY</sequence>